<comment type="function">
    <text evidence="1">Allows the formation of correctly charged Gln-tRNA(Gln) through the transamidation of misacylated Glu-tRNA(Gln) in organisms which lack glutaminyl-tRNA synthetase. The reaction takes place in the presence of glutamine and ATP through an activated gamma-phospho-Glu-tRNA(Gln). The GatDE system is specific for glutamate and does not act on aspartate.</text>
</comment>
<comment type="catalytic activity">
    <reaction evidence="1">
        <text>L-glutamyl-tRNA(Gln) + L-glutamine + ATP + H2O = L-glutaminyl-tRNA(Gln) + L-glutamate + ADP + phosphate + H(+)</text>
        <dbReference type="Rhea" id="RHEA:17521"/>
        <dbReference type="Rhea" id="RHEA-COMP:9681"/>
        <dbReference type="Rhea" id="RHEA-COMP:9684"/>
        <dbReference type="ChEBI" id="CHEBI:15377"/>
        <dbReference type="ChEBI" id="CHEBI:15378"/>
        <dbReference type="ChEBI" id="CHEBI:29985"/>
        <dbReference type="ChEBI" id="CHEBI:30616"/>
        <dbReference type="ChEBI" id="CHEBI:43474"/>
        <dbReference type="ChEBI" id="CHEBI:58359"/>
        <dbReference type="ChEBI" id="CHEBI:78520"/>
        <dbReference type="ChEBI" id="CHEBI:78521"/>
        <dbReference type="ChEBI" id="CHEBI:456216"/>
    </reaction>
</comment>
<comment type="subunit">
    <text evidence="1">Heterodimer of GatD and GatE.</text>
</comment>
<comment type="similarity">
    <text evidence="1">Belongs to the asparaginase 1 family. GatD subfamily.</text>
</comment>
<organism>
    <name type="scientific">Thermofilum pendens (strain DSM 2475 / Hrk 5)</name>
    <dbReference type="NCBI Taxonomy" id="368408"/>
    <lineage>
        <taxon>Archaea</taxon>
        <taxon>Thermoproteota</taxon>
        <taxon>Thermoprotei</taxon>
        <taxon>Thermofilales</taxon>
        <taxon>Thermofilaceae</taxon>
        <taxon>Thermofilum</taxon>
    </lineage>
</organism>
<feature type="chain" id="PRO_1000082414" description="Glutamyl-tRNA(Gln) amidotransferase subunit D">
    <location>
        <begin position="1"/>
        <end position="451"/>
    </location>
</feature>
<feature type="domain" description="Asparaginase/glutaminase" evidence="2">
    <location>
        <begin position="99"/>
        <end position="432"/>
    </location>
</feature>
<feature type="region of interest" description="Disordered" evidence="3">
    <location>
        <begin position="78"/>
        <end position="97"/>
    </location>
</feature>
<feature type="active site" evidence="1">
    <location>
        <position position="109"/>
    </location>
</feature>
<feature type="active site" evidence="1">
    <location>
        <position position="187"/>
    </location>
</feature>
<feature type="active site" evidence="1">
    <location>
        <position position="188"/>
    </location>
</feature>
<feature type="active site" evidence="1">
    <location>
        <position position="266"/>
    </location>
</feature>
<protein>
    <recommendedName>
        <fullName evidence="1">Glutamyl-tRNA(Gln) amidotransferase subunit D</fullName>
        <shortName evidence="1">Glu-ADT subunit D</shortName>
        <ecNumber evidence="1">6.3.5.-</ecNumber>
    </recommendedName>
</protein>
<reference key="1">
    <citation type="journal article" date="2008" name="J. Bacteriol.">
        <title>Genome sequence of Thermofilum pendens reveals an exceptional loss of biosynthetic pathways without genome reduction.</title>
        <authorList>
            <person name="Anderson I."/>
            <person name="Rodriguez J."/>
            <person name="Susanti D."/>
            <person name="Porat I."/>
            <person name="Reich C."/>
            <person name="Ulrich L.E."/>
            <person name="Elkins J.G."/>
            <person name="Mavromatis K."/>
            <person name="Lykidis A."/>
            <person name="Kim E."/>
            <person name="Thompson L.S."/>
            <person name="Nolan M."/>
            <person name="Land M."/>
            <person name="Copeland A."/>
            <person name="Lapidus A."/>
            <person name="Lucas S."/>
            <person name="Detter C."/>
            <person name="Zhulin I.B."/>
            <person name="Olsen G.J."/>
            <person name="Whitman W."/>
            <person name="Mukhopadhyay B."/>
            <person name="Bristow J."/>
            <person name="Kyrpides N."/>
        </authorList>
    </citation>
    <scope>NUCLEOTIDE SEQUENCE [LARGE SCALE GENOMIC DNA]</scope>
    <source>
        <strain>DSM 2475 / Hrk 5</strain>
    </source>
</reference>
<accession>A1RX40</accession>
<dbReference type="EC" id="6.3.5.-" evidence="1"/>
<dbReference type="EMBL" id="CP000505">
    <property type="protein sequence ID" value="ABL77770.1"/>
    <property type="molecule type" value="Genomic_DNA"/>
</dbReference>
<dbReference type="RefSeq" id="WP_011752035.1">
    <property type="nucleotide sequence ID" value="NC_008698.1"/>
</dbReference>
<dbReference type="SMR" id="A1RX40"/>
<dbReference type="STRING" id="368408.Tpen_0361"/>
<dbReference type="EnsemblBacteria" id="ABL77770">
    <property type="protein sequence ID" value="ABL77770"/>
    <property type="gene ID" value="Tpen_0361"/>
</dbReference>
<dbReference type="GeneID" id="4601490"/>
<dbReference type="KEGG" id="tpe:Tpen_0361"/>
<dbReference type="eggNOG" id="arCOG01924">
    <property type="taxonomic scope" value="Archaea"/>
</dbReference>
<dbReference type="HOGENOM" id="CLU_019134_2_1_2"/>
<dbReference type="OrthoDB" id="371959at2157"/>
<dbReference type="Proteomes" id="UP000000641">
    <property type="component" value="Chromosome"/>
</dbReference>
<dbReference type="GO" id="GO:0004067">
    <property type="term" value="F:asparaginase activity"/>
    <property type="evidence" value="ECO:0007669"/>
    <property type="project" value="InterPro"/>
</dbReference>
<dbReference type="GO" id="GO:0005524">
    <property type="term" value="F:ATP binding"/>
    <property type="evidence" value="ECO:0007669"/>
    <property type="project" value="UniProtKB-KW"/>
</dbReference>
<dbReference type="GO" id="GO:0050567">
    <property type="term" value="F:glutaminyl-tRNA synthase (glutamine-hydrolyzing) activity"/>
    <property type="evidence" value="ECO:0007669"/>
    <property type="project" value="UniProtKB-UniRule"/>
</dbReference>
<dbReference type="GO" id="GO:0006520">
    <property type="term" value="P:amino acid metabolic process"/>
    <property type="evidence" value="ECO:0007669"/>
    <property type="project" value="InterPro"/>
</dbReference>
<dbReference type="GO" id="GO:0006450">
    <property type="term" value="P:regulation of translational fidelity"/>
    <property type="evidence" value="ECO:0007669"/>
    <property type="project" value="InterPro"/>
</dbReference>
<dbReference type="GO" id="GO:0006412">
    <property type="term" value="P:translation"/>
    <property type="evidence" value="ECO:0007669"/>
    <property type="project" value="UniProtKB-UniRule"/>
</dbReference>
<dbReference type="CDD" id="cd08962">
    <property type="entry name" value="GatD"/>
    <property type="match status" value="1"/>
</dbReference>
<dbReference type="Gene3D" id="2.30.30.520">
    <property type="match status" value="1"/>
</dbReference>
<dbReference type="Gene3D" id="3.40.50.40">
    <property type="match status" value="1"/>
</dbReference>
<dbReference type="Gene3D" id="3.40.50.1170">
    <property type="entry name" value="L-asparaginase, N-terminal domain"/>
    <property type="match status" value="1"/>
</dbReference>
<dbReference type="HAMAP" id="MF_00586">
    <property type="entry name" value="GatD"/>
    <property type="match status" value="1"/>
</dbReference>
<dbReference type="InterPro" id="IPR006033">
    <property type="entry name" value="AsnA_fam"/>
</dbReference>
<dbReference type="InterPro" id="IPR036152">
    <property type="entry name" value="Asp/glu_Ase-like_sf"/>
</dbReference>
<dbReference type="InterPro" id="IPR006034">
    <property type="entry name" value="Asparaginase/glutaminase-like"/>
</dbReference>
<dbReference type="InterPro" id="IPR027475">
    <property type="entry name" value="Asparaginase/glutaminase_AS2"/>
</dbReference>
<dbReference type="InterPro" id="IPR040919">
    <property type="entry name" value="Asparaginase_C"/>
</dbReference>
<dbReference type="InterPro" id="IPR011878">
    <property type="entry name" value="GatD"/>
</dbReference>
<dbReference type="InterPro" id="IPR040918">
    <property type="entry name" value="GatD_N"/>
</dbReference>
<dbReference type="InterPro" id="IPR037222">
    <property type="entry name" value="GatD_N_sf"/>
</dbReference>
<dbReference type="InterPro" id="IPR027473">
    <property type="entry name" value="L-asparaginase_C"/>
</dbReference>
<dbReference type="InterPro" id="IPR027474">
    <property type="entry name" value="L-asparaginase_N"/>
</dbReference>
<dbReference type="InterPro" id="IPR037152">
    <property type="entry name" value="L-asparaginase_N_sf"/>
</dbReference>
<dbReference type="NCBIfam" id="TIGR00519">
    <property type="entry name" value="asnASE_I"/>
    <property type="match status" value="1"/>
</dbReference>
<dbReference type="NCBIfam" id="TIGR02153">
    <property type="entry name" value="gatD_arch"/>
    <property type="match status" value="1"/>
</dbReference>
<dbReference type="NCBIfam" id="NF003217">
    <property type="entry name" value="PRK04183.1"/>
    <property type="match status" value="1"/>
</dbReference>
<dbReference type="PANTHER" id="PTHR11707:SF28">
    <property type="entry name" value="60 KDA LYSOPHOSPHOLIPASE"/>
    <property type="match status" value="1"/>
</dbReference>
<dbReference type="PANTHER" id="PTHR11707">
    <property type="entry name" value="L-ASPARAGINASE"/>
    <property type="match status" value="1"/>
</dbReference>
<dbReference type="Pfam" id="PF00710">
    <property type="entry name" value="Asparaginase"/>
    <property type="match status" value="1"/>
</dbReference>
<dbReference type="Pfam" id="PF17763">
    <property type="entry name" value="Asparaginase_C"/>
    <property type="match status" value="1"/>
</dbReference>
<dbReference type="Pfam" id="PF18195">
    <property type="entry name" value="GatD_N"/>
    <property type="match status" value="1"/>
</dbReference>
<dbReference type="PIRSF" id="PIRSF500175">
    <property type="entry name" value="Glu_ADT_D"/>
    <property type="match status" value="1"/>
</dbReference>
<dbReference type="PIRSF" id="PIRSF001220">
    <property type="entry name" value="L-ASNase_gatD"/>
    <property type="match status" value="1"/>
</dbReference>
<dbReference type="PRINTS" id="PR00139">
    <property type="entry name" value="ASNGLNASE"/>
</dbReference>
<dbReference type="SMART" id="SM00870">
    <property type="entry name" value="Asparaginase"/>
    <property type="match status" value="1"/>
</dbReference>
<dbReference type="SUPFAM" id="SSF141300">
    <property type="entry name" value="GatD N-terminal domain-like"/>
    <property type="match status" value="1"/>
</dbReference>
<dbReference type="SUPFAM" id="SSF53774">
    <property type="entry name" value="Glutaminase/Asparaginase"/>
    <property type="match status" value="1"/>
</dbReference>
<dbReference type="PROSITE" id="PS00917">
    <property type="entry name" value="ASN_GLN_ASE_2"/>
    <property type="match status" value="1"/>
</dbReference>
<dbReference type="PROSITE" id="PS51732">
    <property type="entry name" value="ASN_GLN_ASE_3"/>
    <property type="match status" value="1"/>
</dbReference>
<name>GATD_THEPD</name>
<keyword id="KW-0067">ATP-binding</keyword>
<keyword id="KW-0436">Ligase</keyword>
<keyword id="KW-0547">Nucleotide-binding</keyword>
<keyword id="KW-0648">Protein biosynthesis</keyword>
<keyword id="KW-1185">Reference proteome</keyword>
<gene>
    <name evidence="1" type="primary">gatD</name>
    <name type="ordered locus">Tpen_0361</name>
</gene>
<sequence>MSQGYSEKVKELLDSVGAAFFDRVKIKLADGLVLEGLLMPRPAFGDPDVVVLKLDNGYNIGISLQRIVSVELLEKFSPREAPTPGEEEGSQEDFGQPEPRVFFVGTGGTIASRVDYVTGAVYPYFTAEELYSMIPELKRLARISSETLFSIFSEDMTPSHWQQLASKIGEIFRRESDVKGVVVAHGTDTLHYSAAAMAFAVQEAPGPIVFVGAQRSSDRPSSDAALNVIGATVVAVHAPFAESVIAMHGSVNDDTILVHRGVRARKMHTSRRDAFMSINSKPIAEVDPLRGSLKLSTSTYKGRGDDVVVQASFSDKVALVKFYPGMSPDIFDFYLEKGFKGLVIEGTGLGHVSTALIDSVRRLVREGVFVAMASQCIFGRVNMNVYRTGVELIKAGVVPAGDMIPETAYVKLSWILGQTEDPEEIQRLFTANLAFEISERSEFDHYPGARW</sequence>
<proteinExistence type="inferred from homology"/>
<evidence type="ECO:0000255" key="1">
    <source>
        <dbReference type="HAMAP-Rule" id="MF_00586"/>
    </source>
</evidence>
<evidence type="ECO:0000255" key="2">
    <source>
        <dbReference type="PROSITE-ProRule" id="PRU01068"/>
    </source>
</evidence>
<evidence type="ECO:0000256" key="3">
    <source>
        <dbReference type="SAM" id="MobiDB-lite"/>
    </source>
</evidence>